<sequence length="131" mass="13744">MKFTTVATVFAISSLAAAKGGEKDHGKASTVTKYVTETTHRYGRFDKTSRSKKPKETGTHRYGKFNKTPRPVTTTVLVKESDLPKKRDAVVARDSKNASSNSTTSSGNNGVATGVSLGLAGVLAVGAALVI</sequence>
<organism>
    <name type="scientific">Candida albicans (strain SC5314 / ATCC MYA-2876)</name>
    <name type="common">Yeast</name>
    <dbReference type="NCBI Taxonomy" id="237561"/>
    <lineage>
        <taxon>Eukaryota</taxon>
        <taxon>Fungi</taxon>
        <taxon>Dikarya</taxon>
        <taxon>Ascomycota</taxon>
        <taxon>Saccharomycotina</taxon>
        <taxon>Pichiomycetes</taxon>
        <taxon>Debaryomycetaceae</taxon>
        <taxon>Candida/Lodderomyces clade</taxon>
        <taxon>Candida</taxon>
    </lineage>
</organism>
<gene>
    <name type="primary">PGA14</name>
    <name type="ordered locus">CAALFM_C500270WA</name>
    <name type="ORF">CaO19.8583</name>
    <name type="ORF">CaO19.968</name>
</gene>
<feature type="signal peptide" evidence="2">
    <location>
        <begin position="1"/>
        <end position="18"/>
    </location>
</feature>
<feature type="chain" id="PRO_0000424802" description="Hydrophilin PGA14">
    <location>
        <begin position="19"/>
        <end position="105"/>
    </location>
</feature>
<feature type="propeptide" id="PRO_0000424803" description="Removed in mature form" evidence="2">
    <location>
        <begin position="106"/>
        <end position="131"/>
    </location>
</feature>
<feature type="region of interest" description="Disordered" evidence="3">
    <location>
        <begin position="42"/>
        <end position="110"/>
    </location>
</feature>
<feature type="compositionally biased region" description="Basic and acidic residues" evidence="3">
    <location>
        <begin position="42"/>
        <end position="59"/>
    </location>
</feature>
<feature type="compositionally biased region" description="Basic and acidic residues" evidence="3">
    <location>
        <begin position="79"/>
        <end position="96"/>
    </location>
</feature>
<feature type="compositionally biased region" description="Low complexity" evidence="3">
    <location>
        <begin position="97"/>
        <end position="110"/>
    </location>
</feature>
<feature type="lipid moiety-binding region" description="GPI-anchor amidated serine" evidence="2">
    <location>
        <position position="105"/>
    </location>
</feature>
<feature type="glycosylation site" description="N-linked (GlcNAc...) asparagine" evidence="2">
    <location>
        <position position="97"/>
    </location>
</feature>
<feature type="glycosylation site" description="N-linked (GlcNAc...) asparagine" evidence="2">
    <location>
        <position position="101"/>
    </location>
</feature>
<protein>
    <recommendedName>
        <fullName>Hydrophilin PGA14</fullName>
    </recommendedName>
    <alternativeName>
        <fullName>Predicted GPI-anchored protein 14</fullName>
    </alternativeName>
</protein>
<accession>Q5A4X8</accession>
<accession>A0A1D8PMW1</accession>
<reference key="1">
    <citation type="journal article" date="2004" name="Proc. Natl. Acad. Sci. U.S.A.">
        <title>The diploid genome sequence of Candida albicans.</title>
        <authorList>
            <person name="Jones T."/>
            <person name="Federspiel N.A."/>
            <person name="Chibana H."/>
            <person name="Dungan J."/>
            <person name="Kalman S."/>
            <person name="Magee B.B."/>
            <person name="Newport G."/>
            <person name="Thorstenson Y.R."/>
            <person name="Agabian N."/>
            <person name="Magee P.T."/>
            <person name="Davis R.W."/>
            <person name="Scherer S."/>
        </authorList>
    </citation>
    <scope>NUCLEOTIDE SEQUENCE [LARGE SCALE GENOMIC DNA]</scope>
    <source>
        <strain>SC5314 / ATCC MYA-2876</strain>
    </source>
</reference>
<reference key="2">
    <citation type="journal article" date="2007" name="Genome Biol.">
        <title>Assembly of the Candida albicans genome into sixteen supercontigs aligned on the eight chromosomes.</title>
        <authorList>
            <person name="van het Hoog M."/>
            <person name="Rast T.J."/>
            <person name="Martchenko M."/>
            <person name="Grindle S."/>
            <person name="Dignard D."/>
            <person name="Hogues H."/>
            <person name="Cuomo C."/>
            <person name="Berriman M."/>
            <person name="Scherer S."/>
            <person name="Magee B.B."/>
            <person name="Whiteway M."/>
            <person name="Chibana H."/>
            <person name="Nantel A."/>
            <person name="Magee P.T."/>
        </authorList>
    </citation>
    <scope>GENOME REANNOTATION</scope>
    <source>
        <strain>SC5314 / ATCC MYA-2876</strain>
    </source>
</reference>
<reference key="3">
    <citation type="journal article" date="2013" name="Genome Biol.">
        <title>Assembly of a phased diploid Candida albicans genome facilitates allele-specific measurements and provides a simple model for repeat and indel structure.</title>
        <authorList>
            <person name="Muzzey D."/>
            <person name="Schwartz K."/>
            <person name="Weissman J.S."/>
            <person name="Sherlock G."/>
        </authorList>
    </citation>
    <scope>NUCLEOTIDE SEQUENCE [LARGE SCALE GENOMIC DNA]</scope>
    <scope>GENOME REANNOTATION</scope>
    <source>
        <strain>SC5314 / ATCC MYA-2876</strain>
    </source>
</reference>
<reference key="4">
    <citation type="journal article" date="2003" name="Yeast">
        <title>An analysis of the Candida albicans genome database for soluble secreted proteins using computer-based prediction algorithms.</title>
        <authorList>
            <person name="Lee S.A."/>
            <person name="Wormsley S."/>
            <person name="Kamoun S."/>
            <person name="Lee A.F."/>
            <person name="Joiner K."/>
            <person name="Wong B."/>
        </authorList>
    </citation>
    <scope>PREDICTION OF GPI-ANCHOR</scope>
</reference>
<reference key="5">
    <citation type="journal article" date="2003" name="Yeast">
        <title>Genome-wide identification of fungal GPI proteins.</title>
        <authorList>
            <person name="De Groot P.W."/>
            <person name="Hellingwerf K.J."/>
            <person name="Klis F.M."/>
        </authorList>
    </citation>
    <scope>PREDICTION OF GPI-ANCHOR</scope>
</reference>
<reference key="6">
    <citation type="journal article" date="2005" name="Mol. Biol. Cell">
        <title>Global roles of Ssn6 in Tup1- and Nrg1-dependent gene regulation in the fungal pathogen, Candida albicans.</title>
        <authorList>
            <person name="Garcia-Sanchez S."/>
            <person name="Mavor A.L."/>
            <person name="Russell C.L."/>
            <person name="Argimon S."/>
            <person name="Dennison P."/>
            <person name="Enjalbert B."/>
            <person name="Brown A.J."/>
        </authorList>
    </citation>
    <scope>INDUCTION</scope>
</reference>
<reference key="7">
    <citation type="journal article" date="2006" name="Fungal Genet. Biol.">
        <title>Genomic response programs of Candida albicans following protoplasting and regeneration.</title>
        <authorList>
            <person name="Castillo L."/>
            <person name="Martinez A.I."/>
            <person name="Garcera A."/>
            <person name="Garcia-Martinez J."/>
            <person name="Ruiz-Herrera J."/>
            <person name="Valentin E."/>
            <person name="Sentandreu R."/>
        </authorList>
    </citation>
    <scope>INDUCTION</scope>
</reference>
<reference key="8">
    <citation type="journal article" date="2013" name="Antimicrob. Agents Chemother.">
        <title>Milbemycins: more than efflux inhibitors for fungal pathogens.</title>
        <authorList>
            <person name="Silva L.V."/>
            <person name="Sanguinetti M."/>
            <person name="Vandeputte P."/>
            <person name="Torelli R."/>
            <person name="Rochat B."/>
            <person name="Sanglard D."/>
        </authorList>
    </citation>
    <scope>INDUCTION</scope>
</reference>
<evidence type="ECO:0000250" key="1"/>
<evidence type="ECO:0000255" key="2"/>
<evidence type="ECO:0000256" key="3">
    <source>
        <dbReference type="SAM" id="MobiDB-lite"/>
    </source>
</evidence>
<evidence type="ECO:0000269" key="4">
    <source>
    </source>
</evidence>
<evidence type="ECO:0000269" key="5">
    <source>
    </source>
</evidence>
<evidence type="ECO:0000269" key="6">
    <source>
    </source>
</evidence>
<evidence type="ECO:0000305" key="7"/>
<comment type="function">
    <text evidence="1">Hydrophilin which is essential to overcome the simple stress of the desiccation-rehydration process.</text>
</comment>
<comment type="subcellular location">
    <subcellularLocation>
        <location>Secreted</location>
        <location>Cell wall</location>
    </subcellularLocation>
    <subcellularLocation>
        <location evidence="7">Membrane</location>
        <topology evidence="7">Lipid-anchor</topology>
        <topology evidence="7">GPI-anchor</topology>
    </subcellularLocation>
</comment>
<comment type="induction">
    <text evidence="4 5 6">Induced during cell wall regeneration and upon milbemycins A3 oxim derivative (A3Ox) treatment. Expression is also regulated by SSN6.</text>
</comment>
<comment type="PTM">
    <text evidence="1">The GPI-anchor is attached to the protein in the endoplasmic reticulum and serves to target the protein to the cell surface. There, the glucosamine-inositol phospholipid moiety is cleaved off and the GPI-modified mannoprotein is covalently attached via its lipidless GPI glycan remnant to the 1,6-beta-glucan of the outer cell wall layer (By similarity).</text>
</comment>
<comment type="similarity">
    <text evidence="7">Belongs to the PGA14 family.</text>
</comment>
<name>PGA14_CANAL</name>
<dbReference type="EMBL" id="CP017627">
    <property type="protein sequence ID" value="AOW29473.1"/>
    <property type="molecule type" value="Genomic_DNA"/>
</dbReference>
<dbReference type="RefSeq" id="XP_716806.1">
    <property type="nucleotide sequence ID" value="XM_711713.1"/>
</dbReference>
<dbReference type="STRING" id="237561.Q5A4X8"/>
<dbReference type="GlyCosmos" id="Q5A4X8">
    <property type="glycosylation" value="2 sites, No reported glycans"/>
</dbReference>
<dbReference type="EnsemblFungi" id="C5_00270W_A-T">
    <property type="protein sequence ID" value="C5_00270W_A-T-p1"/>
    <property type="gene ID" value="C5_00270W_A"/>
</dbReference>
<dbReference type="GeneID" id="3641560"/>
<dbReference type="KEGG" id="cal:CAALFM_C500270WA"/>
<dbReference type="CGD" id="CAL0000177457">
    <property type="gene designation" value="PGA14"/>
</dbReference>
<dbReference type="VEuPathDB" id="FungiDB:C5_00270W_A"/>
<dbReference type="eggNOG" id="ENOG502RZ9P">
    <property type="taxonomic scope" value="Eukaryota"/>
</dbReference>
<dbReference type="HOGENOM" id="CLU_098355_0_0_1"/>
<dbReference type="InParanoid" id="Q5A4X8"/>
<dbReference type="OMA" id="GTHRYGK"/>
<dbReference type="OrthoDB" id="4094978at2759"/>
<dbReference type="PRO" id="PR:Q5A4X8"/>
<dbReference type="Proteomes" id="UP000000559">
    <property type="component" value="Chromosome 5"/>
</dbReference>
<dbReference type="GO" id="GO:0005576">
    <property type="term" value="C:extracellular region"/>
    <property type="evidence" value="ECO:0007669"/>
    <property type="project" value="UniProtKB-KW"/>
</dbReference>
<dbReference type="GO" id="GO:0098552">
    <property type="term" value="C:side of membrane"/>
    <property type="evidence" value="ECO:0007669"/>
    <property type="project" value="UniProtKB-KW"/>
</dbReference>
<proteinExistence type="evidence at protein level"/>
<keyword id="KW-0134">Cell wall</keyword>
<keyword id="KW-0325">Glycoprotein</keyword>
<keyword id="KW-0336">GPI-anchor</keyword>
<keyword id="KW-0449">Lipoprotein</keyword>
<keyword id="KW-0472">Membrane</keyword>
<keyword id="KW-1185">Reference proteome</keyword>
<keyword id="KW-0964">Secreted</keyword>
<keyword id="KW-0732">Signal</keyword>
<keyword id="KW-0346">Stress response</keyword>